<accession>A8I491</accession>
<name>LPXA_AZOC5</name>
<evidence type="ECO:0000255" key="1">
    <source>
        <dbReference type="HAMAP-Rule" id="MF_00387"/>
    </source>
</evidence>
<reference key="1">
    <citation type="submission" date="2007-04" db="EMBL/GenBank/DDBJ databases">
        <title>Complete genome sequence of the nitrogen-fixing bacterium Azorhizobium caulinodans ORS571.</title>
        <authorList>
            <person name="Lee K.B."/>
            <person name="Backer P.D."/>
            <person name="Aono T."/>
            <person name="Liu C.T."/>
            <person name="Suzuki S."/>
            <person name="Suzuki T."/>
            <person name="Kaneko T."/>
            <person name="Yamada M."/>
            <person name="Tabata S."/>
            <person name="Kupfer D.M."/>
            <person name="Najar F.Z."/>
            <person name="Wiley G.B."/>
            <person name="Roe B."/>
            <person name="Binnewies T."/>
            <person name="Ussery D."/>
            <person name="Vereecke D."/>
            <person name="Gevers D."/>
            <person name="Holsters M."/>
            <person name="Oyaizu H."/>
        </authorList>
    </citation>
    <scope>NUCLEOTIDE SEQUENCE [LARGE SCALE GENOMIC DNA]</scope>
    <source>
        <strain>ATCC 43989 / DSM 5975 / JCM 20966 / LMG 6465 / NBRC 14845 / NCIMB 13405 / ORS 571</strain>
    </source>
</reference>
<comment type="function">
    <text evidence="1">Involved in the biosynthesis of lipid A, a phosphorylated glycolipid that anchors the lipopolysaccharide to the outer membrane of the cell.</text>
</comment>
<comment type="catalytic activity">
    <reaction evidence="1">
        <text>a (3R)-hydroxyacyl-[ACP] + UDP-N-acetyl-alpha-D-glucosamine = a UDP-3-O-[(3R)-3-hydroxyacyl]-N-acetyl-alpha-D-glucosamine + holo-[ACP]</text>
        <dbReference type="Rhea" id="RHEA:67812"/>
        <dbReference type="Rhea" id="RHEA-COMP:9685"/>
        <dbReference type="Rhea" id="RHEA-COMP:9945"/>
        <dbReference type="ChEBI" id="CHEBI:57705"/>
        <dbReference type="ChEBI" id="CHEBI:64479"/>
        <dbReference type="ChEBI" id="CHEBI:78827"/>
        <dbReference type="ChEBI" id="CHEBI:173225"/>
        <dbReference type="EC" id="2.3.1.129"/>
    </reaction>
</comment>
<comment type="pathway">
    <text evidence="1">Glycolipid biosynthesis; lipid IV(A) biosynthesis; lipid IV(A) from (3R)-3-hydroxytetradecanoyl-[acyl-carrier-protein] and UDP-N-acetyl-alpha-D-glucosamine: step 1/6.</text>
</comment>
<comment type="subunit">
    <text evidence="1">Homotrimer.</text>
</comment>
<comment type="subcellular location">
    <subcellularLocation>
        <location evidence="1">Cytoplasm</location>
    </subcellularLocation>
</comment>
<comment type="similarity">
    <text evidence="1">Belongs to the transferase hexapeptide repeat family. LpxA subfamily.</text>
</comment>
<sequence>MNVALIDPTARVADGAWLADDVEVGPYCIVGPDVTLEDGVRLHAHVNVQGVTTLGARTQVYPFASLGTPPQSVHYKGEKTSLVVGTDCQIREHVTMNTGTASGRGVTRVGNNCMLMTAAHVAHDCLVGDNVIFANNATLGGHVEVGDNVFLGGLSAVHQFVRIGAQVMIGGVTGVREDVIPFGYAIGQNANLVGLNVVGMKRRGFSKSELHAARAAYRDLFFGEGTFAERLAGLRERQDASPFIKALVSFVDAGGKRALCHPSRGVVAQED</sequence>
<gene>
    <name evidence="1" type="primary">lpxA</name>
    <name type="ordered locus">AZC_1704</name>
</gene>
<dbReference type="EC" id="2.3.1.129" evidence="1"/>
<dbReference type="EMBL" id="AP009384">
    <property type="protein sequence ID" value="BAF87702.1"/>
    <property type="molecule type" value="Genomic_DNA"/>
</dbReference>
<dbReference type="SMR" id="A8I491"/>
<dbReference type="STRING" id="438753.AZC_1704"/>
<dbReference type="KEGG" id="azc:AZC_1704"/>
<dbReference type="eggNOG" id="COG1043">
    <property type="taxonomic scope" value="Bacteria"/>
</dbReference>
<dbReference type="HOGENOM" id="CLU_061249_0_0_5"/>
<dbReference type="UniPathway" id="UPA00359">
    <property type="reaction ID" value="UER00477"/>
</dbReference>
<dbReference type="Proteomes" id="UP000000270">
    <property type="component" value="Chromosome"/>
</dbReference>
<dbReference type="GO" id="GO:0005737">
    <property type="term" value="C:cytoplasm"/>
    <property type="evidence" value="ECO:0007669"/>
    <property type="project" value="UniProtKB-SubCell"/>
</dbReference>
<dbReference type="GO" id="GO:0016020">
    <property type="term" value="C:membrane"/>
    <property type="evidence" value="ECO:0007669"/>
    <property type="project" value="GOC"/>
</dbReference>
<dbReference type="GO" id="GO:0008780">
    <property type="term" value="F:acyl-[acyl-carrier-protein]-UDP-N-acetylglucosamine O-acyltransferase activity"/>
    <property type="evidence" value="ECO:0007669"/>
    <property type="project" value="UniProtKB-UniRule"/>
</dbReference>
<dbReference type="GO" id="GO:0009245">
    <property type="term" value="P:lipid A biosynthetic process"/>
    <property type="evidence" value="ECO:0007669"/>
    <property type="project" value="UniProtKB-UniRule"/>
</dbReference>
<dbReference type="CDD" id="cd03351">
    <property type="entry name" value="LbH_UDP-GlcNAc_AT"/>
    <property type="match status" value="1"/>
</dbReference>
<dbReference type="Gene3D" id="2.160.10.10">
    <property type="entry name" value="Hexapeptide repeat proteins"/>
    <property type="match status" value="1"/>
</dbReference>
<dbReference type="Gene3D" id="1.20.1180.10">
    <property type="entry name" value="Udp N-acetylglucosamine O-acyltransferase, C-terminal domain"/>
    <property type="match status" value="1"/>
</dbReference>
<dbReference type="HAMAP" id="MF_00387">
    <property type="entry name" value="LpxA"/>
    <property type="match status" value="1"/>
</dbReference>
<dbReference type="InterPro" id="IPR029098">
    <property type="entry name" value="Acetyltransf_C"/>
</dbReference>
<dbReference type="InterPro" id="IPR037157">
    <property type="entry name" value="Acetyltransf_C_sf"/>
</dbReference>
<dbReference type="InterPro" id="IPR001451">
    <property type="entry name" value="Hexapep"/>
</dbReference>
<dbReference type="InterPro" id="IPR010137">
    <property type="entry name" value="Lipid_A_LpxA"/>
</dbReference>
<dbReference type="InterPro" id="IPR011004">
    <property type="entry name" value="Trimer_LpxA-like_sf"/>
</dbReference>
<dbReference type="NCBIfam" id="TIGR01852">
    <property type="entry name" value="lipid_A_lpxA"/>
    <property type="match status" value="1"/>
</dbReference>
<dbReference type="NCBIfam" id="NF003657">
    <property type="entry name" value="PRK05289.1"/>
    <property type="match status" value="1"/>
</dbReference>
<dbReference type="PANTHER" id="PTHR43480">
    <property type="entry name" value="ACYL-[ACYL-CARRIER-PROTEIN]--UDP-N-ACETYLGLUCOSAMINE O-ACYLTRANSFERASE"/>
    <property type="match status" value="1"/>
</dbReference>
<dbReference type="PANTHER" id="PTHR43480:SF1">
    <property type="entry name" value="ACYL-[ACYL-CARRIER-PROTEIN]--UDP-N-ACETYLGLUCOSAMINE O-ACYLTRANSFERASE, MITOCHONDRIAL-RELATED"/>
    <property type="match status" value="1"/>
</dbReference>
<dbReference type="Pfam" id="PF13720">
    <property type="entry name" value="Acetyltransf_11"/>
    <property type="match status" value="1"/>
</dbReference>
<dbReference type="Pfam" id="PF00132">
    <property type="entry name" value="Hexapep"/>
    <property type="match status" value="1"/>
</dbReference>
<dbReference type="PIRSF" id="PIRSF000456">
    <property type="entry name" value="UDP-GlcNAc_acltr"/>
    <property type="match status" value="1"/>
</dbReference>
<dbReference type="SUPFAM" id="SSF51161">
    <property type="entry name" value="Trimeric LpxA-like enzymes"/>
    <property type="match status" value="1"/>
</dbReference>
<dbReference type="PROSITE" id="PS00101">
    <property type="entry name" value="HEXAPEP_TRANSFERASES"/>
    <property type="match status" value="2"/>
</dbReference>
<feature type="chain" id="PRO_1000134379" description="Acyl-[acyl-carrier-protein]--UDP-N-acetylglucosamine O-acyltransferase">
    <location>
        <begin position="1"/>
        <end position="271"/>
    </location>
</feature>
<proteinExistence type="inferred from homology"/>
<protein>
    <recommendedName>
        <fullName evidence="1">Acyl-[acyl-carrier-protein]--UDP-N-acetylglucosamine O-acyltransferase</fullName>
        <shortName evidence="1">UDP-N-acetylglucosamine acyltransferase</shortName>
        <ecNumber evidence="1">2.3.1.129</ecNumber>
    </recommendedName>
</protein>
<organism>
    <name type="scientific">Azorhizobium caulinodans (strain ATCC 43989 / DSM 5975 / JCM 20966 / LMG 6465 / NBRC 14845 / NCIMB 13405 / ORS 571)</name>
    <dbReference type="NCBI Taxonomy" id="438753"/>
    <lineage>
        <taxon>Bacteria</taxon>
        <taxon>Pseudomonadati</taxon>
        <taxon>Pseudomonadota</taxon>
        <taxon>Alphaproteobacteria</taxon>
        <taxon>Hyphomicrobiales</taxon>
        <taxon>Xanthobacteraceae</taxon>
        <taxon>Azorhizobium</taxon>
    </lineage>
</organism>
<keyword id="KW-0012">Acyltransferase</keyword>
<keyword id="KW-0963">Cytoplasm</keyword>
<keyword id="KW-0441">Lipid A biosynthesis</keyword>
<keyword id="KW-0444">Lipid biosynthesis</keyword>
<keyword id="KW-0443">Lipid metabolism</keyword>
<keyword id="KW-1185">Reference proteome</keyword>
<keyword id="KW-0677">Repeat</keyword>
<keyword id="KW-0808">Transferase</keyword>